<proteinExistence type="evidence at protein level"/>
<organism>
    <name type="scientific">Homo sapiens</name>
    <name type="common">Human</name>
    <dbReference type="NCBI Taxonomy" id="9606"/>
    <lineage>
        <taxon>Eukaryota</taxon>
        <taxon>Metazoa</taxon>
        <taxon>Chordata</taxon>
        <taxon>Craniata</taxon>
        <taxon>Vertebrata</taxon>
        <taxon>Euteleostomi</taxon>
        <taxon>Mammalia</taxon>
        <taxon>Eutheria</taxon>
        <taxon>Euarchontoglires</taxon>
        <taxon>Primates</taxon>
        <taxon>Haplorrhini</taxon>
        <taxon>Catarrhini</taxon>
        <taxon>Hominidae</taxon>
        <taxon>Homo</taxon>
    </lineage>
</organism>
<feature type="chain" id="PRO_0000086032" description="Interleukin-1 receptor-associated kinase-like 2">
    <location>
        <begin position="1"/>
        <end position="625"/>
    </location>
</feature>
<feature type="domain" description="Death">
    <location>
        <begin position="13"/>
        <end position="94"/>
    </location>
</feature>
<feature type="domain" description="Protein kinase" evidence="1">
    <location>
        <begin position="210"/>
        <end position="489"/>
    </location>
</feature>
<feature type="region of interest" description="Disordered" evidence="2">
    <location>
        <begin position="111"/>
        <end position="181"/>
    </location>
</feature>
<feature type="region of interest" description="Disordered" evidence="2">
    <location>
        <begin position="510"/>
        <end position="540"/>
    </location>
</feature>
<feature type="compositionally biased region" description="Polar residues" evidence="2">
    <location>
        <begin position="169"/>
        <end position="181"/>
    </location>
</feature>
<feature type="compositionally biased region" description="Polar residues" evidence="2">
    <location>
        <begin position="516"/>
        <end position="526"/>
    </location>
</feature>
<feature type="binding site" evidence="1">
    <location>
        <begin position="216"/>
        <end position="224"/>
    </location>
    <ligand>
        <name>ATP</name>
        <dbReference type="ChEBI" id="CHEBI:30616"/>
    </ligand>
</feature>
<feature type="binding site" evidence="1">
    <location>
        <position position="237"/>
    </location>
    <ligand>
        <name>ATP</name>
        <dbReference type="ChEBI" id="CHEBI:30616"/>
    </ligand>
</feature>
<feature type="binding site" evidence="1">
    <location>
        <begin position="337"/>
        <end position="340"/>
    </location>
    <ligand>
        <name>ATP</name>
        <dbReference type="ChEBI" id="CHEBI:30616"/>
    </ligand>
</feature>
<feature type="modified residue" description="Phosphoserine" evidence="8">
    <location>
        <position position="144"/>
    </location>
</feature>
<feature type="sequence variant" id="VAR_041342" description="In dbSNP:rs34945585." evidence="4">
    <original>R</original>
    <variation>Q</variation>
    <location>
        <position position="43"/>
    </location>
</feature>
<feature type="sequence variant" id="VAR_030527" description="In dbSNP:rs11465864." evidence="4">
    <original>S</original>
    <variation>Y</variation>
    <location>
        <position position="47"/>
    </location>
</feature>
<feature type="sequence variant" id="VAR_041343" description="In dbSNP:rs55898544." evidence="4">
    <original>I</original>
    <variation>V</variation>
    <location>
        <position position="99"/>
    </location>
</feature>
<feature type="sequence variant" id="VAR_041344" description="In dbSNP:rs56053222." evidence="4">
    <original>R</original>
    <variation>T</variation>
    <location>
        <position position="147"/>
    </location>
</feature>
<feature type="sequence variant" id="VAR_041345" description="In dbSNP:rs35060588." evidence="4">
    <original>R</original>
    <variation>G</variation>
    <location>
        <position position="214"/>
    </location>
</feature>
<feature type="sequence variant" id="VAR_041346" description="In a lung adenocarcinoma sample; somatic mutation." evidence="4">
    <original>S</original>
    <variation>L</variation>
    <location>
        <position position="249"/>
    </location>
</feature>
<feature type="sequence variant" id="VAR_030528" description="In dbSNP:rs3844283." evidence="4">
    <original>L</original>
    <variation>V</variation>
    <location>
        <position position="392"/>
    </location>
</feature>
<feature type="sequence variant" id="VAR_041347" description="In a lung adenocarcinoma sample; somatic mutation." evidence="4">
    <original>P</original>
    <variation>T</variation>
    <location>
        <position position="421"/>
    </location>
</feature>
<feature type="sequence variant" id="VAR_030529" description="In dbSNP:rs708035." evidence="4 5 6">
    <original>D</original>
    <variation>E</variation>
    <location>
        <position position="431"/>
    </location>
</feature>
<feature type="sequence variant" id="VAR_030530" description="In dbSNP:rs11465927." evidence="4">
    <original>L</original>
    <variation>V</variation>
    <location>
        <position position="439"/>
    </location>
</feature>
<feature type="sequence variant" id="VAR_041348" description="In dbSNP:rs56242986." evidence="4">
    <original>D</original>
    <variation>N</variation>
    <location>
        <position position="469"/>
    </location>
</feature>
<feature type="sequence variant" id="VAR_030531" description="In dbSNP:rs9854688." evidence="4">
    <original>L</original>
    <variation>I</variation>
    <location>
        <position position="503"/>
    </location>
</feature>
<feature type="sequence variant" id="VAR_041349" description="In dbSNP:rs55740652." evidence="4">
    <original>R</original>
    <variation>W</variation>
    <location>
        <position position="566"/>
    </location>
</feature>
<feature type="sequence variant" id="VAR_030532" description="In dbSNP:rs11465930.">
    <original>D</original>
    <variation>H</variation>
    <location>
        <position position="574"/>
    </location>
</feature>
<feature type="helix" evidence="9">
    <location>
        <begin position="5"/>
        <end position="7"/>
    </location>
</feature>
<feature type="helix" evidence="9">
    <location>
        <begin position="10"/>
        <end position="16"/>
    </location>
</feature>
<feature type="turn" evidence="9">
    <location>
        <begin position="17"/>
        <end position="22"/>
    </location>
</feature>
<feature type="helix" evidence="9">
    <location>
        <begin position="25"/>
        <end position="32"/>
    </location>
</feature>
<feature type="turn" evidence="9">
    <location>
        <begin position="33"/>
        <end position="36"/>
    </location>
</feature>
<feature type="helix" evidence="9">
    <location>
        <begin position="39"/>
        <end position="47"/>
    </location>
</feature>
<feature type="helix" evidence="9">
    <location>
        <begin position="48"/>
        <end position="50"/>
    </location>
</feature>
<feature type="helix" evidence="9">
    <location>
        <begin position="56"/>
        <end position="65"/>
    </location>
</feature>
<feature type="turn" evidence="9">
    <location>
        <begin position="66"/>
        <end position="68"/>
    </location>
</feature>
<feature type="helix" evidence="9">
    <location>
        <begin position="72"/>
        <end position="76"/>
    </location>
</feature>
<feature type="turn" evidence="9">
    <location>
        <begin position="77"/>
        <end position="81"/>
    </location>
</feature>
<feature type="helix" evidence="9">
    <location>
        <begin position="84"/>
        <end position="87"/>
    </location>
</feature>
<feature type="turn" evidence="9">
    <location>
        <begin position="88"/>
        <end position="91"/>
    </location>
</feature>
<accession>O43187</accession>
<accession>B4DQZ6</accession>
<accession>Q08AG6</accession>
<accession>Q5K546</accession>
<comment type="function">
    <text evidence="3 5">Binds to the IL-1 type I receptor following IL-1 engagement, triggering intracellular signaling cascades leading to transcriptional up-regulation and mRNA stabilization.</text>
</comment>
<comment type="subunit">
    <text evidence="5">Interacts with MYD88. IL-1 stimulation leads to the formation of a signaling complex which dissociates from the IL-1 receptor following the binding of PELI1.</text>
</comment>
<comment type="interaction">
    <interactant intactId="EBI-447733">
        <id>O43187</id>
    </interactant>
    <interactant intactId="EBI-365961">
        <id>P10398</id>
        <label>ARAF</label>
    </interactant>
    <organismsDiffer>false</organismsDiffer>
    <experiments>2</experiments>
</comment>
<comment type="interaction">
    <interactant intactId="EBI-447733">
        <id>O43187</id>
    </interactant>
    <interactant intactId="EBI-448378">
        <id>Q9NWZ3</id>
        <label>IRAK4</label>
    </interactant>
    <organismsDiffer>false</organismsDiffer>
    <experiments>6</experiments>
</comment>
<comment type="interaction">
    <interactant intactId="EBI-447733">
        <id>O43187</id>
    </interactant>
    <interactant intactId="EBI-719212">
        <id>P46977</id>
        <label>STT3A</label>
    </interactant>
    <organismsDiffer>false</organismsDiffer>
    <experiments>2</experiments>
</comment>
<comment type="interaction">
    <interactant intactId="EBI-447733">
        <id>O43187</id>
    </interactant>
    <interactant intactId="EBI-372899">
        <id>Q13148</id>
        <label>TARDBP</label>
    </interactant>
    <organismsDiffer>false</organismsDiffer>
    <experiments>2</experiments>
</comment>
<comment type="interaction">
    <interactant intactId="EBI-447733">
        <id>O43187</id>
    </interactant>
    <interactant intactId="EBI-528644">
        <id>P58753</id>
        <label>TIRAP</label>
    </interactant>
    <organismsDiffer>false</organismsDiffer>
    <experiments>2</experiments>
</comment>
<comment type="interaction">
    <interactant intactId="EBI-447733">
        <id>O43187</id>
    </interactant>
    <interactant intactId="EBI-74615">
        <id>Q9H0E2</id>
        <label>TOLLIP</label>
    </interactant>
    <organismsDiffer>false</organismsDiffer>
    <experiments>2</experiments>
</comment>
<comment type="interaction">
    <interactant intactId="EBI-447733">
        <id>O43187</id>
    </interactant>
    <interactant intactId="EBI-359276">
        <id>Q9Y4K3</id>
        <label>TRAF6</label>
    </interactant>
    <organismsDiffer>false</organismsDiffer>
    <experiments>4</experiments>
</comment>
<comment type="interaction">
    <interactant intactId="EBI-447733">
        <id>O43187</id>
    </interactant>
    <interactant intactId="EBI-747793">
        <id>Q5D1E8</id>
        <label>ZC3H12A</label>
    </interactant>
    <organismsDiffer>false</organismsDiffer>
    <experiments>2</experiments>
</comment>
<comment type="interaction">
    <interactant intactId="EBI-447733">
        <id>O43187</id>
    </interactant>
    <interactant intactId="EBI-8022707">
        <id>P68467</id>
        <label>OPG044</label>
    </interactant>
    <organismsDiffer>true</organismsDiffer>
    <experiments>2</experiments>
</comment>
<comment type="interaction">
    <interactant intactId="EBI-447733">
        <id>O43187</id>
    </interactant>
    <interactant intactId="EBI-6117196">
        <id>Q6PDS3</id>
        <label>Sarm1</label>
    </interactant>
    <organismsDiffer>true</organismsDiffer>
    <experiments>2</experiments>
</comment>
<comment type="tissue specificity">
    <text evidence="5">Expressed in spleen, thymus, prostate, lung, liver, skeletal muscle, kidney, pancreas and peripheral blood leukocytes.</text>
</comment>
<comment type="domain">
    <text>The protein kinase domain is predicted to be catalytically inactive.</text>
</comment>
<comment type="similarity">
    <text evidence="7">Belongs to the protein kinase superfamily. TKL Ser/Thr protein kinase family. Pelle subfamily.</text>
</comment>
<comment type="caution">
    <text evidence="7">Asn-335 is present instead of the conserved Asp which is expected to be an active site residue. This enzyme has been shown to be catalytically inactive.</text>
</comment>
<gene>
    <name type="primary">IRAK2</name>
</gene>
<keyword id="KW-0002">3D-structure</keyword>
<keyword id="KW-0067">ATP-binding</keyword>
<keyword id="KW-0547">Nucleotide-binding</keyword>
<keyword id="KW-0597">Phosphoprotein</keyword>
<keyword id="KW-1267">Proteomics identification</keyword>
<keyword id="KW-1185">Reference proteome</keyword>
<dbReference type="EMBL" id="AJ496794">
    <property type="protein sequence ID" value="CAD43180.3"/>
    <property type="molecule type" value="mRNA"/>
</dbReference>
<dbReference type="EMBL" id="AK299033">
    <property type="protein sequence ID" value="BAG61108.1"/>
    <property type="molecule type" value="mRNA"/>
</dbReference>
<dbReference type="EMBL" id="BC125184">
    <property type="protein sequence ID" value="AAI25185.1"/>
    <property type="molecule type" value="mRNA"/>
</dbReference>
<dbReference type="EMBL" id="AF026273">
    <property type="protein sequence ID" value="AAB87669.1"/>
    <property type="molecule type" value="mRNA"/>
</dbReference>
<dbReference type="CCDS" id="CCDS33697.1"/>
<dbReference type="RefSeq" id="NP_001561.3">
    <property type="nucleotide sequence ID" value="NM_001570.3"/>
</dbReference>
<dbReference type="PDB" id="3MOP">
    <property type="method" value="X-ray"/>
    <property type="resolution" value="3.40 A"/>
    <property type="chains" value="K/L/M/N=2-112"/>
</dbReference>
<dbReference type="PDBsum" id="3MOP"/>
<dbReference type="SMR" id="O43187"/>
<dbReference type="BioGRID" id="109865">
    <property type="interactions" value="66"/>
</dbReference>
<dbReference type="ComplexPortal" id="CPX-10281">
    <property type="entry name" value="Myddosome core complex"/>
</dbReference>
<dbReference type="CORUM" id="O43187"/>
<dbReference type="DIP" id="DIP-31800N"/>
<dbReference type="ELM" id="O43187"/>
<dbReference type="FunCoup" id="O43187">
    <property type="interactions" value="1262"/>
</dbReference>
<dbReference type="IntAct" id="O43187">
    <property type="interactions" value="50"/>
</dbReference>
<dbReference type="MINT" id="O43187"/>
<dbReference type="STRING" id="9606.ENSP00000256458"/>
<dbReference type="BindingDB" id="O43187"/>
<dbReference type="ChEMBL" id="CHEMBL4105759"/>
<dbReference type="GlyGen" id="O43187">
    <property type="glycosylation" value="1 site, 1 O-linked glycan (1 site)"/>
</dbReference>
<dbReference type="iPTMnet" id="O43187"/>
<dbReference type="PhosphoSitePlus" id="O43187"/>
<dbReference type="BioMuta" id="IRAK2"/>
<dbReference type="CPTAC" id="CPTAC-1319"/>
<dbReference type="jPOST" id="O43187"/>
<dbReference type="MassIVE" id="O43187"/>
<dbReference type="PaxDb" id="9606-ENSP00000256458"/>
<dbReference type="PeptideAtlas" id="O43187"/>
<dbReference type="ProteomicsDB" id="48804"/>
<dbReference type="Antibodypedia" id="4605">
    <property type="antibodies" value="716 antibodies from 42 providers"/>
</dbReference>
<dbReference type="DNASU" id="3656"/>
<dbReference type="Ensembl" id="ENST00000256458.5">
    <property type="protein sequence ID" value="ENSP00000256458.4"/>
    <property type="gene ID" value="ENSG00000134070.5"/>
</dbReference>
<dbReference type="GeneID" id="3656"/>
<dbReference type="KEGG" id="hsa:3656"/>
<dbReference type="MANE-Select" id="ENST00000256458.5">
    <property type="protein sequence ID" value="ENSP00000256458.4"/>
    <property type="RefSeq nucleotide sequence ID" value="NM_001570.4"/>
    <property type="RefSeq protein sequence ID" value="NP_001561.3"/>
</dbReference>
<dbReference type="UCSC" id="uc003bve.2">
    <property type="organism name" value="human"/>
</dbReference>
<dbReference type="AGR" id="HGNC:6113"/>
<dbReference type="CTD" id="3656"/>
<dbReference type="DisGeNET" id="3656"/>
<dbReference type="GeneCards" id="IRAK2"/>
<dbReference type="HGNC" id="HGNC:6113">
    <property type="gene designation" value="IRAK2"/>
</dbReference>
<dbReference type="HPA" id="ENSG00000134070">
    <property type="expression patterns" value="Tissue enhanced (bone)"/>
</dbReference>
<dbReference type="MIM" id="603304">
    <property type="type" value="gene"/>
</dbReference>
<dbReference type="neXtProt" id="NX_O43187"/>
<dbReference type="OpenTargets" id="ENSG00000134070"/>
<dbReference type="PharmGKB" id="PA29913"/>
<dbReference type="VEuPathDB" id="HostDB:ENSG00000134070"/>
<dbReference type="eggNOG" id="KOG1187">
    <property type="taxonomic scope" value="Eukaryota"/>
</dbReference>
<dbReference type="GeneTree" id="ENSGT00940000159835"/>
<dbReference type="HOGENOM" id="CLU_000288_173_0_1"/>
<dbReference type="InParanoid" id="O43187"/>
<dbReference type="OMA" id="ALSEWDW"/>
<dbReference type="OrthoDB" id="4062651at2759"/>
<dbReference type="PAN-GO" id="O43187">
    <property type="GO annotations" value="7 GO annotations based on evolutionary models"/>
</dbReference>
<dbReference type="PhylomeDB" id="O43187"/>
<dbReference type="TreeFam" id="TF328924"/>
<dbReference type="BRENDA" id="2.7.10.2">
    <property type="organism ID" value="2681"/>
</dbReference>
<dbReference type="PathwayCommons" id="O43187"/>
<dbReference type="Reactome" id="R-HSA-166058">
    <property type="pathway name" value="MyD88:MAL(TIRAP) cascade initiated on plasma membrane"/>
</dbReference>
<dbReference type="Reactome" id="R-HSA-168638">
    <property type="pathway name" value="NOD1/2 Signaling Pathway"/>
</dbReference>
<dbReference type="Reactome" id="R-HSA-445989">
    <property type="pathway name" value="TAK1-dependent IKK and NF-kappa-B activation"/>
</dbReference>
<dbReference type="Reactome" id="R-HSA-450302">
    <property type="pathway name" value="activated TAK1 mediates p38 MAPK activation"/>
</dbReference>
<dbReference type="Reactome" id="R-HSA-450321">
    <property type="pathway name" value="JNK (c-Jun kinases) phosphorylation and activation mediated by activated human TAK1"/>
</dbReference>
<dbReference type="Reactome" id="R-HSA-9020702">
    <property type="pathway name" value="Interleukin-1 signaling"/>
</dbReference>
<dbReference type="Reactome" id="R-HSA-937042">
    <property type="pathway name" value="IRAK2 mediated activation of TAK1 complex"/>
</dbReference>
<dbReference type="Reactome" id="R-HSA-937072">
    <property type="pathway name" value="TRAF6-mediated induction of TAK1 complex within TLR4 complex"/>
</dbReference>
<dbReference type="Reactome" id="R-HSA-9692916">
    <property type="pathway name" value="SARS-CoV-1 activates/modulates innate immune responses"/>
</dbReference>
<dbReference type="Reactome" id="R-HSA-9705671">
    <property type="pathway name" value="SARS-CoV-2 activates/modulates innate and adaptive immune responses"/>
</dbReference>
<dbReference type="Reactome" id="R-HSA-975138">
    <property type="pathway name" value="TRAF6 mediated induction of NFkB and MAP kinases upon TLR7/8 or 9 activation"/>
</dbReference>
<dbReference type="Reactome" id="R-HSA-975155">
    <property type="pathway name" value="MyD88 dependent cascade initiated on endosome"/>
</dbReference>
<dbReference type="Reactome" id="R-HSA-975163">
    <property type="pathway name" value="IRAK2 mediated activation of TAK1 complex upon TLR7/8 or 9 stimulation"/>
</dbReference>
<dbReference type="Reactome" id="R-HSA-975871">
    <property type="pathway name" value="MyD88 cascade initiated on plasma membrane"/>
</dbReference>
<dbReference type="SignaLink" id="O43187"/>
<dbReference type="SIGNOR" id="O43187"/>
<dbReference type="BioGRID-ORCS" id="3656">
    <property type="hits" value="7 hits in 1185 CRISPR screens"/>
</dbReference>
<dbReference type="ChiTaRS" id="IRAK2">
    <property type="organism name" value="human"/>
</dbReference>
<dbReference type="EvolutionaryTrace" id="O43187"/>
<dbReference type="GeneWiki" id="IRAK2"/>
<dbReference type="GenomeRNAi" id="3656"/>
<dbReference type="Pharos" id="O43187">
    <property type="development level" value="Tbio"/>
</dbReference>
<dbReference type="PRO" id="PR:O43187"/>
<dbReference type="Proteomes" id="UP000005640">
    <property type="component" value="Chromosome 3"/>
</dbReference>
<dbReference type="RNAct" id="O43187">
    <property type="molecule type" value="protein"/>
</dbReference>
<dbReference type="Bgee" id="ENSG00000134070">
    <property type="expression patterns" value="Expressed in cartilage tissue and 149 other cell types or tissues"/>
</dbReference>
<dbReference type="GO" id="GO:0005737">
    <property type="term" value="C:cytoplasm"/>
    <property type="evidence" value="ECO:0000318"/>
    <property type="project" value="GO_Central"/>
</dbReference>
<dbReference type="GO" id="GO:0005829">
    <property type="term" value="C:cytosol"/>
    <property type="evidence" value="ECO:0000304"/>
    <property type="project" value="Reactome"/>
</dbReference>
<dbReference type="GO" id="GO:0010008">
    <property type="term" value="C:endosome membrane"/>
    <property type="evidence" value="ECO:0000304"/>
    <property type="project" value="Reactome"/>
</dbReference>
<dbReference type="GO" id="GO:0005634">
    <property type="term" value="C:nucleus"/>
    <property type="evidence" value="ECO:0000318"/>
    <property type="project" value="GO_Central"/>
</dbReference>
<dbReference type="GO" id="GO:0005886">
    <property type="term" value="C:plasma membrane"/>
    <property type="evidence" value="ECO:0000318"/>
    <property type="project" value="GO_Central"/>
</dbReference>
<dbReference type="GO" id="GO:0005524">
    <property type="term" value="F:ATP binding"/>
    <property type="evidence" value="ECO:0007669"/>
    <property type="project" value="UniProtKB-KW"/>
</dbReference>
<dbReference type="GO" id="GO:0060090">
    <property type="term" value="F:molecular adaptor activity"/>
    <property type="evidence" value="ECO:0000314"/>
    <property type="project" value="UniProt"/>
</dbReference>
<dbReference type="GO" id="GO:0046982">
    <property type="term" value="F:protein heterodimerization activity"/>
    <property type="evidence" value="ECO:0000353"/>
    <property type="project" value="BHF-UCL"/>
</dbReference>
<dbReference type="GO" id="GO:0042803">
    <property type="term" value="F:protein homodimerization activity"/>
    <property type="evidence" value="ECO:0000353"/>
    <property type="project" value="BHF-UCL"/>
</dbReference>
<dbReference type="GO" id="GO:0004672">
    <property type="term" value="F:protein kinase activity"/>
    <property type="evidence" value="ECO:0007669"/>
    <property type="project" value="InterPro"/>
</dbReference>
<dbReference type="GO" id="GO:0035591">
    <property type="term" value="F:signaling adaptor activity"/>
    <property type="evidence" value="ECO:0000314"/>
    <property type="project" value="UniProt"/>
</dbReference>
<dbReference type="GO" id="GO:0007249">
    <property type="term" value="P:canonical NF-kappaB signal transduction"/>
    <property type="evidence" value="ECO:0000314"/>
    <property type="project" value="UniProt"/>
</dbReference>
<dbReference type="GO" id="GO:0006954">
    <property type="term" value="P:inflammatory response"/>
    <property type="evidence" value="ECO:0000304"/>
    <property type="project" value="ProtInc"/>
</dbReference>
<dbReference type="GO" id="GO:0070498">
    <property type="term" value="P:interleukin-1-mediated signaling pathway"/>
    <property type="evidence" value="ECO:0000315"/>
    <property type="project" value="BHF-UCL"/>
</dbReference>
<dbReference type="GO" id="GO:0035556">
    <property type="term" value="P:intracellular signal transduction"/>
    <property type="evidence" value="ECO:0000318"/>
    <property type="project" value="GO_Central"/>
</dbReference>
<dbReference type="GO" id="GO:0031663">
    <property type="term" value="P:lipopolysaccharide-mediated signaling pathway"/>
    <property type="evidence" value="ECO:0000318"/>
    <property type="project" value="GO_Central"/>
</dbReference>
<dbReference type="GO" id="GO:0002755">
    <property type="term" value="P:MyD88-dependent toll-like receptor signaling pathway"/>
    <property type="evidence" value="ECO:0000304"/>
    <property type="project" value="BHF-UCL"/>
</dbReference>
<dbReference type="GO" id="GO:0043124">
    <property type="term" value="P:negative regulation of canonical NF-kappaB signal transduction"/>
    <property type="evidence" value="ECO:0000315"/>
    <property type="project" value="BHF-UCL"/>
</dbReference>
<dbReference type="GO" id="GO:0043123">
    <property type="term" value="P:positive regulation of canonical NF-kappaB signal transduction"/>
    <property type="evidence" value="ECO:0000318"/>
    <property type="project" value="GO_Central"/>
</dbReference>
<dbReference type="GO" id="GO:0006468">
    <property type="term" value="P:protein phosphorylation"/>
    <property type="evidence" value="ECO:0000304"/>
    <property type="project" value="ProtInc"/>
</dbReference>
<dbReference type="GO" id="GO:0001959">
    <property type="term" value="P:regulation of cytokine-mediated signaling pathway"/>
    <property type="evidence" value="ECO:0000315"/>
    <property type="project" value="BHF-UCL"/>
</dbReference>
<dbReference type="GO" id="GO:0070555">
    <property type="term" value="P:response to interleukin-1"/>
    <property type="evidence" value="ECO:0000315"/>
    <property type="project" value="BHF-UCL"/>
</dbReference>
<dbReference type="GO" id="GO:0008063">
    <property type="term" value="P:Toll signaling pathway"/>
    <property type="evidence" value="ECO:0000318"/>
    <property type="project" value="GO_Central"/>
</dbReference>
<dbReference type="GO" id="GO:0034142">
    <property type="term" value="P:toll-like receptor 4 signaling pathway"/>
    <property type="evidence" value="ECO:0000314"/>
    <property type="project" value="UniProt"/>
</dbReference>
<dbReference type="CDD" id="cd08795">
    <property type="entry name" value="Death_IRAK2"/>
    <property type="match status" value="1"/>
</dbReference>
<dbReference type="CDD" id="cd14157">
    <property type="entry name" value="STKc_IRAK2"/>
    <property type="match status" value="1"/>
</dbReference>
<dbReference type="FunFam" id="1.10.510.10:FF:000586">
    <property type="entry name" value="Interleukin-1 receptor-associated kinase-like 2"/>
    <property type="match status" value="1"/>
</dbReference>
<dbReference type="FunFam" id="1.10.533.10:FF:000030">
    <property type="entry name" value="Interleukin-1 receptor-associated kinase-like 2"/>
    <property type="match status" value="1"/>
</dbReference>
<dbReference type="FunFam" id="3.30.200.20:FF:000412">
    <property type="entry name" value="interleukin-1 receptor-associated kinase-like 2"/>
    <property type="match status" value="1"/>
</dbReference>
<dbReference type="Gene3D" id="1.10.533.10">
    <property type="entry name" value="Death Domain, Fas"/>
    <property type="match status" value="1"/>
</dbReference>
<dbReference type="Gene3D" id="3.30.200.20">
    <property type="entry name" value="Phosphorylase Kinase, domain 1"/>
    <property type="match status" value="1"/>
</dbReference>
<dbReference type="Gene3D" id="1.10.510.10">
    <property type="entry name" value="Transferase(Phosphotransferase) domain 1"/>
    <property type="match status" value="1"/>
</dbReference>
<dbReference type="InterPro" id="IPR011029">
    <property type="entry name" value="DEATH-like_dom_sf"/>
</dbReference>
<dbReference type="InterPro" id="IPR000488">
    <property type="entry name" value="Death_dom"/>
</dbReference>
<dbReference type="InterPro" id="IPR042151">
    <property type="entry name" value="Death_IRAK2"/>
</dbReference>
<dbReference type="InterPro" id="IPR011009">
    <property type="entry name" value="Kinase-like_dom_sf"/>
</dbReference>
<dbReference type="InterPro" id="IPR000719">
    <property type="entry name" value="Prot_kinase_dom"/>
</dbReference>
<dbReference type="PANTHER" id="PTHR24419">
    <property type="entry name" value="INTERLEUKIN-1 RECEPTOR-ASSOCIATED KINASE"/>
    <property type="match status" value="1"/>
</dbReference>
<dbReference type="PANTHER" id="PTHR24419:SF2">
    <property type="entry name" value="INTERLEUKIN-1 RECEPTOR-ASSOCIATED KINASE-LIKE 2"/>
    <property type="match status" value="1"/>
</dbReference>
<dbReference type="Pfam" id="PF00531">
    <property type="entry name" value="Death"/>
    <property type="match status" value="1"/>
</dbReference>
<dbReference type="Pfam" id="PF00069">
    <property type="entry name" value="Pkinase"/>
    <property type="match status" value="1"/>
</dbReference>
<dbReference type="SUPFAM" id="SSF47986">
    <property type="entry name" value="DEATH domain"/>
    <property type="match status" value="1"/>
</dbReference>
<dbReference type="SUPFAM" id="SSF56112">
    <property type="entry name" value="Protein kinase-like (PK-like)"/>
    <property type="match status" value="1"/>
</dbReference>
<dbReference type="PROSITE" id="PS50011">
    <property type="entry name" value="PROTEIN_KINASE_DOM"/>
    <property type="match status" value="1"/>
</dbReference>
<sequence length="625" mass="69433">MACYIYQLPSWVLDDLCRNMDALSEWDWMEFASYVITDLTQLRKIKSMERVQGVSITRELLWWWGMRQATVQQLVDLLCRLELYRAAQIILNWKPAPEIRCPIPAFPDSVKPEKPLAASVRKAEDEQEEGQPVRMATFPGPGSSPARAHQPAFLQPPEEDAPHSLRSDLPTSSDSKDFSTSIPKQEKLLSLAGDSLFWSEADVVQATDDFNQNRKISQGTFADVYRGHRHGKPFVFKKLRETACSSPGSIERFFQAELQICLRCCHPNVLPVLGFCAARQFHSFIYPYMANGSLQDRLQGQGGSDPLPWPQRVSICSGLLCAVEYLHGLEIIHSNVKSSNVLLDQNLTPKLAHPMAHLCPVNKRSKYTMMKTHLLRTSAAYLPEDFIRVGQLTKRVDIFSCGIVLAEVLTGIPAMDNNRSPVYLKDLLLSDIPSSTASLCSRKTGVENVMAKEICQKYLEKGAGRLPEDCAEALATAACLCLRRRNTSLQEVCGSVAAVEERLRGRETLLPWSGLSEGTGSSSNTPEETDDVDNSSLDASSSMSVAPWAGAATPLLPTENGEGRLRVIVGREADSSSEACVGLEPPQDVTETSWQIEINEAKRKLMENILLYKEEKVDSIELFGP</sequence>
<protein>
    <recommendedName>
        <fullName>Interleukin-1 receptor-associated kinase-like 2</fullName>
        <shortName>IRAK-2</shortName>
    </recommendedName>
</protein>
<name>IRAK2_HUMAN</name>
<evidence type="ECO:0000255" key="1">
    <source>
        <dbReference type="PROSITE-ProRule" id="PRU00159"/>
    </source>
</evidence>
<evidence type="ECO:0000256" key="2">
    <source>
        <dbReference type="SAM" id="MobiDB-lite"/>
    </source>
</evidence>
<evidence type="ECO:0000269" key="3">
    <source>
    </source>
</evidence>
<evidence type="ECO:0000269" key="4">
    <source>
    </source>
</evidence>
<evidence type="ECO:0000269" key="5">
    <source>
    </source>
</evidence>
<evidence type="ECO:0000269" key="6">
    <source ref="1"/>
</evidence>
<evidence type="ECO:0000305" key="7"/>
<evidence type="ECO:0007744" key="8">
    <source>
    </source>
</evidence>
<evidence type="ECO:0007829" key="9">
    <source>
        <dbReference type="PDB" id="3MOP"/>
    </source>
</evidence>
<reference key="1">
    <citation type="submission" date="2002-07" db="EMBL/GenBank/DDBJ databases">
        <title>Identification of Exon 13 and the 3'UTR region of human IRAK-2 and characterisation of the full length gene.</title>
        <authorList>
            <person name="Rosati O."/>
            <person name="Martin M.U."/>
        </authorList>
    </citation>
    <scope>NUCLEOTIDE SEQUENCE [MRNA]</scope>
    <scope>VARIANT GLU-431</scope>
</reference>
<reference key="2">
    <citation type="journal article" date="2004" name="Nat. Genet.">
        <title>Complete sequencing and characterization of 21,243 full-length human cDNAs.</title>
        <authorList>
            <person name="Ota T."/>
            <person name="Suzuki Y."/>
            <person name="Nishikawa T."/>
            <person name="Otsuki T."/>
            <person name="Sugiyama T."/>
            <person name="Irie R."/>
            <person name="Wakamatsu A."/>
            <person name="Hayashi K."/>
            <person name="Sato H."/>
            <person name="Nagai K."/>
            <person name="Kimura K."/>
            <person name="Makita H."/>
            <person name="Sekine M."/>
            <person name="Obayashi M."/>
            <person name="Nishi T."/>
            <person name="Shibahara T."/>
            <person name="Tanaka T."/>
            <person name="Ishii S."/>
            <person name="Yamamoto J."/>
            <person name="Saito K."/>
            <person name="Kawai Y."/>
            <person name="Isono Y."/>
            <person name="Nakamura Y."/>
            <person name="Nagahari K."/>
            <person name="Murakami K."/>
            <person name="Yasuda T."/>
            <person name="Iwayanagi T."/>
            <person name="Wagatsuma M."/>
            <person name="Shiratori A."/>
            <person name="Sudo H."/>
            <person name="Hosoiri T."/>
            <person name="Kaku Y."/>
            <person name="Kodaira H."/>
            <person name="Kondo H."/>
            <person name="Sugawara M."/>
            <person name="Takahashi M."/>
            <person name="Kanda K."/>
            <person name="Yokoi T."/>
            <person name="Furuya T."/>
            <person name="Kikkawa E."/>
            <person name="Omura Y."/>
            <person name="Abe K."/>
            <person name="Kamihara K."/>
            <person name="Katsuta N."/>
            <person name="Sato K."/>
            <person name="Tanikawa M."/>
            <person name="Yamazaki M."/>
            <person name="Ninomiya K."/>
            <person name="Ishibashi T."/>
            <person name="Yamashita H."/>
            <person name="Murakawa K."/>
            <person name="Fujimori K."/>
            <person name="Tanai H."/>
            <person name="Kimata M."/>
            <person name="Watanabe M."/>
            <person name="Hiraoka S."/>
            <person name="Chiba Y."/>
            <person name="Ishida S."/>
            <person name="Ono Y."/>
            <person name="Takiguchi S."/>
            <person name="Watanabe S."/>
            <person name="Yosida M."/>
            <person name="Hotuta T."/>
            <person name="Kusano J."/>
            <person name="Kanehori K."/>
            <person name="Takahashi-Fujii A."/>
            <person name="Hara H."/>
            <person name="Tanase T.-O."/>
            <person name="Nomura Y."/>
            <person name="Togiya S."/>
            <person name="Komai F."/>
            <person name="Hara R."/>
            <person name="Takeuchi K."/>
            <person name="Arita M."/>
            <person name="Imose N."/>
            <person name="Musashino K."/>
            <person name="Yuuki H."/>
            <person name="Oshima A."/>
            <person name="Sasaki N."/>
            <person name="Aotsuka S."/>
            <person name="Yoshikawa Y."/>
            <person name="Matsunawa H."/>
            <person name="Ichihara T."/>
            <person name="Shiohata N."/>
            <person name="Sano S."/>
            <person name="Moriya S."/>
            <person name="Momiyama H."/>
            <person name="Satoh N."/>
            <person name="Takami S."/>
            <person name="Terashima Y."/>
            <person name="Suzuki O."/>
            <person name="Nakagawa S."/>
            <person name="Senoh A."/>
            <person name="Mizoguchi H."/>
            <person name="Goto Y."/>
            <person name="Shimizu F."/>
            <person name="Wakebe H."/>
            <person name="Hishigaki H."/>
            <person name="Watanabe T."/>
            <person name="Sugiyama A."/>
            <person name="Takemoto M."/>
            <person name="Kawakami B."/>
            <person name="Yamazaki M."/>
            <person name="Watanabe K."/>
            <person name="Kumagai A."/>
            <person name="Itakura S."/>
            <person name="Fukuzumi Y."/>
            <person name="Fujimori Y."/>
            <person name="Komiyama M."/>
            <person name="Tashiro H."/>
            <person name="Tanigami A."/>
            <person name="Fujiwara T."/>
            <person name="Ono T."/>
            <person name="Yamada K."/>
            <person name="Fujii Y."/>
            <person name="Ozaki K."/>
            <person name="Hirao M."/>
            <person name="Ohmori Y."/>
            <person name="Kawabata A."/>
            <person name="Hikiji T."/>
            <person name="Kobatake N."/>
            <person name="Inagaki H."/>
            <person name="Ikema Y."/>
            <person name="Okamoto S."/>
            <person name="Okitani R."/>
            <person name="Kawakami T."/>
            <person name="Noguchi S."/>
            <person name="Itoh T."/>
            <person name="Shigeta K."/>
            <person name="Senba T."/>
            <person name="Matsumura K."/>
            <person name="Nakajima Y."/>
            <person name="Mizuno T."/>
            <person name="Morinaga M."/>
            <person name="Sasaki M."/>
            <person name="Togashi T."/>
            <person name="Oyama M."/>
            <person name="Hata H."/>
            <person name="Watanabe M."/>
            <person name="Komatsu T."/>
            <person name="Mizushima-Sugano J."/>
            <person name="Satoh T."/>
            <person name="Shirai Y."/>
            <person name="Takahashi Y."/>
            <person name="Nakagawa K."/>
            <person name="Okumura K."/>
            <person name="Nagase T."/>
            <person name="Nomura N."/>
            <person name="Kikuchi H."/>
            <person name="Masuho Y."/>
            <person name="Yamashita R."/>
            <person name="Nakai K."/>
            <person name="Yada T."/>
            <person name="Nakamura Y."/>
            <person name="Ohara O."/>
            <person name="Isogai T."/>
            <person name="Sugano S."/>
        </authorList>
    </citation>
    <scope>NUCLEOTIDE SEQUENCE [LARGE SCALE MRNA]</scope>
</reference>
<reference key="3">
    <citation type="journal article" date="2004" name="Genome Res.">
        <title>The status, quality, and expansion of the NIH full-length cDNA project: the Mammalian Gene Collection (MGC).</title>
        <authorList>
            <consortium name="The MGC Project Team"/>
        </authorList>
    </citation>
    <scope>NUCLEOTIDE SEQUENCE [LARGE SCALE MRNA]</scope>
</reference>
<reference key="4">
    <citation type="journal article" date="1997" name="Science">
        <title>IRAK (Pelle) family member IRAK-2 and MyD88 as proximal mediators of IL-1 signaling.</title>
        <authorList>
            <person name="Muzio M."/>
            <person name="Ni J."/>
            <person name="Feng P."/>
            <person name="Dixit V.M."/>
        </authorList>
    </citation>
    <scope>NUCLEOTIDE SEQUENCE [MRNA] OF 1-590</scope>
    <scope>FUNCTION</scope>
    <scope>TISSUE SPECIFICITY</scope>
    <scope>INTERACTION WITH TRAF6; MYD88 AND IL1R1</scope>
    <scope>VARIANT GLU-431</scope>
    <source>
        <tissue>Endothelial cell</tissue>
    </source>
</reference>
<reference key="5">
    <citation type="journal article" date="1999" name="J. Biol. Chem.">
        <title>IRAK-M is a novel member of the Pelle/interleukin-1 receptor-associated kinase (IRAK) family.</title>
        <authorList>
            <person name="Wesche H."/>
            <person name="Gao X."/>
            <person name="Li X."/>
            <person name="Kirschning C.J."/>
            <person name="Stark G.R."/>
            <person name="Cao Z."/>
        </authorList>
    </citation>
    <scope>FUNCTION</scope>
</reference>
<reference key="6">
    <citation type="journal article" date="2013" name="J. Proteome Res.">
        <title>Toward a comprehensive characterization of a human cancer cell phosphoproteome.</title>
        <authorList>
            <person name="Zhou H."/>
            <person name="Di Palma S."/>
            <person name="Preisinger C."/>
            <person name="Peng M."/>
            <person name="Polat A.N."/>
            <person name="Heck A.J."/>
            <person name="Mohammed S."/>
        </authorList>
    </citation>
    <scope>PHOSPHORYLATION [LARGE SCALE ANALYSIS] AT SER-144</scope>
    <scope>IDENTIFICATION BY MASS SPECTROMETRY [LARGE SCALE ANALYSIS]</scope>
    <source>
        <tissue>Cervix carcinoma</tissue>
        <tissue>Erythroleukemia</tissue>
    </source>
</reference>
<reference key="7">
    <citation type="journal article" date="2014" name="J. Proteomics">
        <title>An enzyme assisted RP-RPLC approach for in-depth analysis of human liver phosphoproteome.</title>
        <authorList>
            <person name="Bian Y."/>
            <person name="Song C."/>
            <person name="Cheng K."/>
            <person name="Dong M."/>
            <person name="Wang F."/>
            <person name="Huang J."/>
            <person name="Sun D."/>
            <person name="Wang L."/>
            <person name="Ye M."/>
            <person name="Zou H."/>
        </authorList>
    </citation>
    <scope>IDENTIFICATION BY MASS SPECTROMETRY [LARGE SCALE ANALYSIS]</scope>
    <source>
        <tissue>Liver</tissue>
    </source>
</reference>
<reference key="8">
    <citation type="journal article" date="2010" name="Nature">
        <title>Helical assembly in the MyD88-IRAK4-IRAK2 complex in TLR/IL-1R signalling.</title>
        <authorList>
            <person name="Lin S.-C."/>
            <person name="Lo Y.-C."/>
            <person name="Wu H."/>
        </authorList>
    </citation>
    <scope>X-RAY CRYSTALLOGRAPHY (3.40 ANGSTROMS) OF 2-112</scope>
</reference>
<reference key="9">
    <citation type="journal article" date="2007" name="Nature">
        <title>Patterns of somatic mutation in human cancer genomes.</title>
        <authorList>
            <person name="Greenman C."/>
            <person name="Stephens P."/>
            <person name="Smith R."/>
            <person name="Dalgliesh G.L."/>
            <person name="Hunter C."/>
            <person name="Bignell G."/>
            <person name="Davies H."/>
            <person name="Teague J."/>
            <person name="Butler A."/>
            <person name="Stevens C."/>
            <person name="Edkins S."/>
            <person name="O'Meara S."/>
            <person name="Vastrik I."/>
            <person name="Schmidt E.E."/>
            <person name="Avis T."/>
            <person name="Barthorpe S."/>
            <person name="Bhamra G."/>
            <person name="Buck G."/>
            <person name="Choudhury B."/>
            <person name="Clements J."/>
            <person name="Cole J."/>
            <person name="Dicks E."/>
            <person name="Forbes S."/>
            <person name="Gray K."/>
            <person name="Halliday K."/>
            <person name="Harrison R."/>
            <person name="Hills K."/>
            <person name="Hinton J."/>
            <person name="Jenkinson A."/>
            <person name="Jones D."/>
            <person name="Menzies A."/>
            <person name="Mironenko T."/>
            <person name="Perry J."/>
            <person name="Raine K."/>
            <person name="Richardson D."/>
            <person name="Shepherd R."/>
            <person name="Small A."/>
            <person name="Tofts C."/>
            <person name="Varian J."/>
            <person name="Webb T."/>
            <person name="West S."/>
            <person name="Widaa S."/>
            <person name="Yates A."/>
            <person name="Cahill D.P."/>
            <person name="Louis D.N."/>
            <person name="Goldstraw P."/>
            <person name="Nicholson A.G."/>
            <person name="Brasseur F."/>
            <person name="Looijenga L."/>
            <person name="Weber B.L."/>
            <person name="Chiew Y.-E."/>
            <person name="DeFazio A."/>
            <person name="Greaves M.F."/>
            <person name="Green A.R."/>
            <person name="Campbell P."/>
            <person name="Birney E."/>
            <person name="Easton D.F."/>
            <person name="Chenevix-Trench G."/>
            <person name="Tan M.-H."/>
            <person name="Khoo S.K."/>
            <person name="Teh B.T."/>
            <person name="Yuen S.T."/>
            <person name="Leung S.Y."/>
            <person name="Wooster R."/>
            <person name="Futreal P.A."/>
            <person name="Stratton M.R."/>
        </authorList>
    </citation>
    <scope>VARIANTS [LARGE SCALE ANALYSIS] GLN-43; TYR-47; VAL-99; THR-147; GLY-214; LEU-249; VAL-392; THR-421; GLU-431; VAL-439; ASN-469; ILE-503 AND TRP-566</scope>
</reference>